<name>RL362_CLASE</name>
<comment type="similarity">
    <text evidence="1">Belongs to the bacterial ribosomal protein bL36 family.</text>
</comment>
<feature type="chain" id="PRO_0000344661" description="Large ribosomal subunit protein bL36B">
    <location>
        <begin position="1"/>
        <end position="40"/>
    </location>
</feature>
<reference key="1">
    <citation type="journal article" date="2008" name="J. Bacteriol.">
        <title>Genome of the actinomycete plant pathogen Clavibacter michiganensis subsp. sepedonicus suggests recent niche adaptation.</title>
        <authorList>
            <person name="Bentley S.D."/>
            <person name="Corton C."/>
            <person name="Brown S.E."/>
            <person name="Barron A."/>
            <person name="Clark L."/>
            <person name="Doggett J."/>
            <person name="Harris B."/>
            <person name="Ormond D."/>
            <person name="Quail M.A."/>
            <person name="May G."/>
            <person name="Francis D."/>
            <person name="Knudson D."/>
            <person name="Parkhill J."/>
            <person name="Ishimaru C.A."/>
        </authorList>
    </citation>
    <scope>NUCLEOTIDE SEQUENCE [LARGE SCALE GENOMIC DNA]</scope>
    <source>
        <strain>ATCC 33113 / DSM 20744 / JCM 9667 / LMG 2889 / ICMP 2535 / C-1</strain>
    </source>
</reference>
<gene>
    <name evidence="1" type="primary">rpmJ2</name>
    <name type="ordered locus">CMS0029</name>
</gene>
<keyword id="KW-0687">Ribonucleoprotein</keyword>
<keyword id="KW-0689">Ribosomal protein</keyword>
<accession>B0RH97</accession>
<organism>
    <name type="scientific">Clavibacter sepedonicus</name>
    <name type="common">Clavibacter michiganensis subsp. sepedonicus</name>
    <dbReference type="NCBI Taxonomy" id="31964"/>
    <lineage>
        <taxon>Bacteria</taxon>
        <taxon>Bacillati</taxon>
        <taxon>Actinomycetota</taxon>
        <taxon>Actinomycetes</taxon>
        <taxon>Micrococcales</taxon>
        <taxon>Microbacteriaceae</taxon>
        <taxon>Clavibacter</taxon>
    </lineage>
</organism>
<protein>
    <recommendedName>
        <fullName evidence="1">Large ribosomal subunit protein bL36B</fullName>
    </recommendedName>
    <alternativeName>
        <fullName evidence="2">50S ribosomal protein L36 2</fullName>
    </alternativeName>
</protein>
<dbReference type="EMBL" id="AM849034">
    <property type="protein sequence ID" value="CAQ00155.1"/>
    <property type="molecule type" value="Genomic_DNA"/>
</dbReference>
<dbReference type="SMR" id="B0RH97"/>
<dbReference type="STRING" id="31964.CMS0029"/>
<dbReference type="KEGG" id="cms:CMS0029"/>
<dbReference type="eggNOG" id="COG0257">
    <property type="taxonomic scope" value="Bacteria"/>
</dbReference>
<dbReference type="HOGENOM" id="CLU_135723_3_1_11"/>
<dbReference type="OrthoDB" id="9801558at2"/>
<dbReference type="Proteomes" id="UP000001318">
    <property type="component" value="Chromosome"/>
</dbReference>
<dbReference type="GO" id="GO:1990904">
    <property type="term" value="C:ribonucleoprotein complex"/>
    <property type="evidence" value="ECO:0007669"/>
    <property type="project" value="UniProtKB-KW"/>
</dbReference>
<dbReference type="GO" id="GO:0005840">
    <property type="term" value="C:ribosome"/>
    <property type="evidence" value="ECO:0007669"/>
    <property type="project" value="UniProtKB-KW"/>
</dbReference>
<dbReference type="GO" id="GO:0003735">
    <property type="term" value="F:structural constituent of ribosome"/>
    <property type="evidence" value="ECO:0007669"/>
    <property type="project" value="InterPro"/>
</dbReference>
<dbReference type="GO" id="GO:0006412">
    <property type="term" value="P:translation"/>
    <property type="evidence" value="ECO:0007669"/>
    <property type="project" value="UniProtKB-UniRule"/>
</dbReference>
<dbReference type="HAMAP" id="MF_00251">
    <property type="entry name" value="Ribosomal_bL36"/>
    <property type="match status" value="1"/>
</dbReference>
<dbReference type="InterPro" id="IPR000473">
    <property type="entry name" value="Ribosomal_bL36"/>
</dbReference>
<dbReference type="InterPro" id="IPR035977">
    <property type="entry name" value="Ribosomal_bL36_sp"/>
</dbReference>
<dbReference type="InterPro" id="IPR047621">
    <property type="entry name" value="Ribosomal_L36_bact"/>
</dbReference>
<dbReference type="NCBIfam" id="NF002021">
    <property type="entry name" value="PRK00831.1"/>
    <property type="match status" value="1"/>
</dbReference>
<dbReference type="NCBIfam" id="TIGR01022">
    <property type="entry name" value="rpmJ_bact"/>
    <property type="match status" value="1"/>
</dbReference>
<dbReference type="PANTHER" id="PTHR47781">
    <property type="entry name" value="50S RIBOSOMAL PROTEIN L36 2"/>
    <property type="match status" value="1"/>
</dbReference>
<dbReference type="PANTHER" id="PTHR47781:SF1">
    <property type="entry name" value="LARGE RIBOSOMAL SUBUNIT PROTEIN BL36B"/>
    <property type="match status" value="1"/>
</dbReference>
<dbReference type="Pfam" id="PF00444">
    <property type="entry name" value="Ribosomal_L36"/>
    <property type="match status" value="1"/>
</dbReference>
<dbReference type="SUPFAM" id="SSF57840">
    <property type="entry name" value="Ribosomal protein L36"/>
    <property type="match status" value="1"/>
</dbReference>
<sequence length="40" mass="4614">MKVRNSIKALKKLPGAQVVRRRGRVFVINKQNPRNKARQG</sequence>
<proteinExistence type="inferred from homology"/>
<evidence type="ECO:0000255" key="1">
    <source>
        <dbReference type="HAMAP-Rule" id="MF_00251"/>
    </source>
</evidence>
<evidence type="ECO:0000305" key="2"/>